<dbReference type="EMBL" id="CP000247">
    <property type="protein sequence ID" value="ABG72080.1"/>
    <property type="molecule type" value="Genomic_DNA"/>
</dbReference>
<dbReference type="RefSeq" id="WP_001076748.1">
    <property type="nucleotide sequence ID" value="NC_008253.1"/>
</dbReference>
<dbReference type="SMR" id="Q0TAE9"/>
<dbReference type="GeneID" id="93777983"/>
<dbReference type="KEGG" id="ecp:ECP_4124"/>
<dbReference type="HOGENOM" id="CLU_013430_3_0_6"/>
<dbReference type="Proteomes" id="UP000009182">
    <property type="component" value="Chromosome"/>
</dbReference>
<dbReference type="GO" id="GO:0005886">
    <property type="term" value="C:plasma membrane"/>
    <property type="evidence" value="ECO:0007669"/>
    <property type="project" value="UniProtKB-SubCell"/>
</dbReference>
<dbReference type="GO" id="GO:0015086">
    <property type="term" value="F:cadmium ion transmembrane transporter activity"/>
    <property type="evidence" value="ECO:0007669"/>
    <property type="project" value="UniProtKB-UniRule"/>
</dbReference>
<dbReference type="GO" id="GO:0015093">
    <property type="term" value="F:ferrous iron transmembrane transporter activity"/>
    <property type="evidence" value="ECO:0007669"/>
    <property type="project" value="TreeGrafter"/>
</dbReference>
<dbReference type="GO" id="GO:0046872">
    <property type="term" value="F:metal ion binding"/>
    <property type="evidence" value="ECO:0007669"/>
    <property type="project" value="UniProtKB-KW"/>
</dbReference>
<dbReference type="GO" id="GO:0015341">
    <property type="term" value="F:zinc efflux antiporter activity"/>
    <property type="evidence" value="ECO:0007669"/>
    <property type="project" value="TreeGrafter"/>
</dbReference>
<dbReference type="GO" id="GO:0006882">
    <property type="term" value="P:intracellular zinc ion homeostasis"/>
    <property type="evidence" value="ECO:0007669"/>
    <property type="project" value="TreeGrafter"/>
</dbReference>
<dbReference type="FunFam" id="1.20.1510.10:FF:000001">
    <property type="entry name" value="Ferrous-iron efflux pump FieF"/>
    <property type="match status" value="1"/>
</dbReference>
<dbReference type="FunFam" id="3.30.70.1350:FF:000002">
    <property type="entry name" value="Ferrous-iron efflux pump FieF"/>
    <property type="match status" value="1"/>
</dbReference>
<dbReference type="Gene3D" id="1.20.1510.10">
    <property type="entry name" value="Cation efflux protein transmembrane domain"/>
    <property type="match status" value="1"/>
</dbReference>
<dbReference type="Gene3D" id="3.30.70.1350">
    <property type="entry name" value="Cation efflux protein, cytoplasmic domain"/>
    <property type="match status" value="1"/>
</dbReference>
<dbReference type="HAMAP" id="MF_01425">
    <property type="entry name" value="Cation_efflux_FieF"/>
    <property type="match status" value="1"/>
</dbReference>
<dbReference type="InterPro" id="IPR002524">
    <property type="entry name" value="Cation_efflux"/>
</dbReference>
<dbReference type="InterPro" id="IPR027470">
    <property type="entry name" value="Cation_efflux_CTD"/>
</dbReference>
<dbReference type="InterPro" id="IPR036837">
    <property type="entry name" value="Cation_efflux_CTD_sf"/>
</dbReference>
<dbReference type="InterPro" id="IPR023783">
    <property type="entry name" value="Cation_efflux_FieF"/>
</dbReference>
<dbReference type="InterPro" id="IPR027469">
    <property type="entry name" value="Cation_efflux_TMD_sf"/>
</dbReference>
<dbReference type="InterPro" id="IPR050291">
    <property type="entry name" value="CDF_Transporter"/>
</dbReference>
<dbReference type="NCBIfam" id="TIGR01297">
    <property type="entry name" value="CDF"/>
    <property type="match status" value="1"/>
</dbReference>
<dbReference type="NCBIfam" id="NF007064">
    <property type="entry name" value="PRK09509.1"/>
    <property type="match status" value="1"/>
</dbReference>
<dbReference type="PANTHER" id="PTHR43840:SF41">
    <property type="entry name" value="CATION-EFFLUX PUMP FIEF"/>
    <property type="match status" value="1"/>
</dbReference>
<dbReference type="PANTHER" id="PTHR43840">
    <property type="entry name" value="MITOCHONDRIAL METAL TRANSPORTER 1-RELATED"/>
    <property type="match status" value="1"/>
</dbReference>
<dbReference type="Pfam" id="PF01545">
    <property type="entry name" value="Cation_efflux"/>
    <property type="match status" value="1"/>
</dbReference>
<dbReference type="Pfam" id="PF16916">
    <property type="entry name" value="ZT_dimer"/>
    <property type="match status" value="1"/>
</dbReference>
<dbReference type="SUPFAM" id="SSF160240">
    <property type="entry name" value="Cation efflux protein cytoplasmic domain-like"/>
    <property type="match status" value="1"/>
</dbReference>
<dbReference type="SUPFAM" id="SSF161111">
    <property type="entry name" value="Cation efflux protein transmembrane domain-like"/>
    <property type="match status" value="1"/>
</dbReference>
<keyword id="KW-0997">Cell inner membrane</keyword>
<keyword id="KW-1003">Cell membrane</keyword>
<keyword id="KW-0406">Ion transport</keyword>
<keyword id="KW-0408">Iron</keyword>
<keyword id="KW-0410">Iron transport</keyword>
<keyword id="KW-0472">Membrane</keyword>
<keyword id="KW-0479">Metal-binding</keyword>
<keyword id="KW-0812">Transmembrane</keyword>
<keyword id="KW-1133">Transmembrane helix</keyword>
<keyword id="KW-0813">Transport</keyword>
<keyword id="KW-0862">Zinc</keyword>
<keyword id="KW-0864">Zinc transport</keyword>
<organism>
    <name type="scientific">Escherichia coli O6:K15:H31 (strain 536 / UPEC)</name>
    <dbReference type="NCBI Taxonomy" id="362663"/>
    <lineage>
        <taxon>Bacteria</taxon>
        <taxon>Pseudomonadati</taxon>
        <taxon>Pseudomonadota</taxon>
        <taxon>Gammaproteobacteria</taxon>
        <taxon>Enterobacterales</taxon>
        <taxon>Enterobacteriaceae</taxon>
        <taxon>Escherichia</taxon>
    </lineage>
</organism>
<sequence>MNQSYGRLVSRAAIAATAMASLLLLIKIFAWWYTGSVSILAALVDSLVDIGASLTNLLVVRYSLQPADDNHSFGHGKAESLAALAQSMFISGSALFLFLTGIQHLVSPTPMTDPGVGVIVTIVALICTIILVSFQRWVVRRTQSQAVRADMLHYQSDVMMNGAILLALGLSWYGWHRADALFALGIGIYILYSALRMGYEAVQSLLDRALPDEERQEIIDIVTSWPGVSGAHDLRTRQSGPTRFIQIHLEMEDSLPLVQAHMVADQVEQAILRRFPGSDVIIHQDPCSVVPREGKRSMLS</sequence>
<name>FIEF_ECOL5</name>
<proteinExistence type="inferred from homology"/>
<reference key="1">
    <citation type="journal article" date="2006" name="Mol. Microbiol.">
        <title>Role of pathogenicity island-associated integrases in the genome plasticity of uropathogenic Escherichia coli strain 536.</title>
        <authorList>
            <person name="Hochhut B."/>
            <person name="Wilde C."/>
            <person name="Balling G."/>
            <person name="Middendorf B."/>
            <person name="Dobrindt U."/>
            <person name="Brzuszkiewicz E."/>
            <person name="Gottschalk G."/>
            <person name="Carniel E."/>
            <person name="Hacker J."/>
        </authorList>
    </citation>
    <scope>NUCLEOTIDE SEQUENCE [LARGE SCALE GENOMIC DNA]</scope>
    <source>
        <strain>536 / UPEC</strain>
    </source>
</reference>
<evidence type="ECO:0000255" key="1">
    <source>
        <dbReference type="HAMAP-Rule" id="MF_01425"/>
    </source>
</evidence>
<comment type="function">
    <text evidence="1">Divalent metal cation transporter which exports Zn(2+), Cd(2+) and possibly Fe(2+). May be involved in zinc and iron detoxification by efflux.</text>
</comment>
<comment type="catalytic activity">
    <reaction evidence="1">
        <text>Zn(2+)(in) + H(+)(out) = Zn(2+)(out) + H(+)(in)</text>
        <dbReference type="Rhea" id="RHEA:28839"/>
        <dbReference type="ChEBI" id="CHEBI:15378"/>
        <dbReference type="ChEBI" id="CHEBI:29105"/>
    </reaction>
</comment>
<comment type="catalytic activity">
    <reaction evidence="1">
        <text>Cd(2+)(in) + H(+)(out) = Cd(2+)(out) + H(+)(in)</text>
        <dbReference type="Rhea" id="RHEA:28739"/>
        <dbReference type="ChEBI" id="CHEBI:15378"/>
        <dbReference type="ChEBI" id="CHEBI:48775"/>
    </reaction>
</comment>
<comment type="catalytic activity">
    <reaction evidence="1">
        <text>Fe(2+)(in) + H(+)(out) = Fe(2+)(out) + H(+)(in)</text>
        <dbReference type="Rhea" id="RHEA:29439"/>
        <dbReference type="ChEBI" id="CHEBI:15378"/>
        <dbReference type="ChEBI" id="CHEBI:29033"/>
    </reaction>
</comment>
<comment type="subunit">
    <text evidence="1">Homodimer.</text>
</comment>
<comment type="subcellular location">
    <subcellularLocation>
        <location evidence="1">Cell inner membrane</location>
        <topology evidence="1">Multi-pass membrane protein</topology>
    </subcellularLocation>
</comment>
<comment type="similarity">
    <text evidence="1">Belongs to the cation diffusion facilitator (CDF) transporter (TC 2.A.4) family. FieF subfamily.</text>
</comment>
<gene>
    <name evidence="1" type="primary">fieF</name>
    <name type="ordered locus">ECP_4124</name>
</gene>
<protein>
    <recommendedName>
        <fullName evidence="1">Cation-efflux pump FieF</fullName>
    </recommendedName>
</protein>
<accession>Q0TAE9</accession>
<feature type="chain" id="PRO_1000024324" description="Cation-efflux pump FieF">
    <location>
        <begin position="1"/>
        <end position="300"/>
    </location>
</feature>
<feature type="transmembrane region" description="Helical" evidence="1">
    <location>
        <begin position="12"/>
        <end position="32"/>
    </location>
</feature>
<feature type="transmembrane region" description="Helical" evidence="1">
    <location>
        <begin position="39"/>
        <end position="59"/>
    </location>
</feature>
<feature type="transmembrane region" description="Helical" evidence="1">
    <location>
        <begin position="82"/>
        <end position="102"/>
    </location>
</feature>
<feature type="transmembrane region" description="Helical" evidence="1">
    <location>
        <begin position="114"/>
        <end position="134"/>
    </location>
</feature>
<feature type="transmembrane region" description="Helical" evidence="1">
    <location>
        <begin position="156"/>
        <end position="176"/>
    </location>
</feature>
<feature type="transmembrane region" description="Helical" evidence="1">
    <location>
        <begin position="178"/>
        <end position="198"/>
    </location>
</feature>
<feature type="binding site" evidence="1">
    <location>
        <position position="45"/>
    </location>
    <ligand>
        <name>Zn(2+)</name>
        <dbReference type="ChEBI" id="CHEBI:29105"/>
    </ligand>
</feature>
<feature type="binding site" evidence="1">
    <location>
        <position position="49"/>
    </location>
    <ligand>
        <name>Zn(2+)</name>
        <dbReference type="ChEBI" id="CHEBI:29105"/>
    </ligand>
</feature>
<feature type="binding site" evidence="1">
    <location>
        <position position="153"/>
    </location>
    <ligand>
        <name>Zn(2+)</name>
        <dbReference type="ChEBI" id="CHEBI:29105"/>
    </ligand>
</feature>
<feature type="binding site" evidence="1">
    <location>
        <position position="157"/>
    </location>
    <ligand>
        <name>Zn(2+)</name>
        <dbReference type="ChEBI" id="CHEBI:29105"/>
    </ligand>
</feature>